<reference key="1">
    <citation type="journal article" date="1994" name="Plant Mol. Biol.">
        <title>Cloning and molecular analysis of structural genes involved in flavonoid and stilbene biosynthesis in grape (Vitis vinifera L.).</title>
        <authorList>
            <person name="Sparvoli F."/>
            <person name="Martin C."/>
            <person name="Scienza A."/>
            <person name="Gavazzi G."/>
            <person name="Tonelli C."/>
        </authorList>
    </citation>
    <scope>NUCLEOTIDE SEQUENCE [MRNA]</scope>
    <source>
        <strain>cv. Lambrusco Foglia Frastagliata</strain>
    </source>
</reference>
<name>CFI1_VITVI</name>
<comment type="function">
    <text evidence="1">Catalyzes the intramolecular cyclization of bicyclic chalcones into tricyclic (S)-flavanones. Responsible for the isomerization of 4,2',4',6'-tetrahydroxychalcone (also termed chalcone) into naringenin (By similarity).</text>
</comment>
<comment type="catalytic activity">
    <reaction>
        <text>a chalcone = a flavanone.</text>
        <dbReference type="EC" id="5.5.1.6"/>
    </reaction>
</comment>
<comment type="pathway">
    <text>Secondary metabolite biosynthesis; flavonoid biosynthesis.</text>
</comment>
<comment type="miscellaneous">
    <text>Part of the biosynthetic pathway for all classes of flavonoids, a large class of secondary plant metabolites, many of which are brightly colored.</text>
</comment>
<comment type="similarity">
    <text evidence="2">Belongs to the chalcone isomerase family.</text>
</comment>
<gene>
    <name type="primary">CHI1</name>
</gene>
<accession>P51117</accession>
<dbReference type="EC" id="5.5.1.6"/>
<dbReference type="EMBL" id="X75963">
    <property type="protein sequence ID" value="CAA53577.1"/>
    <property type="molecule type" value="mRNA"/>
</dbReference>
<dbReference type="RefSeq" id="NP_001268033.1">
    <property type="nucleotide sequence ID" value="NM_001281104.1"/>
</dbReference>
<dbReference type="SMR" id="P51117"/>
<dbReference type="GeneID" id="100233078"/>
<dbReference type="KEGG" id="vvi:100233078"/>
<dbReference type="OrthoDB" id="886060at71240"/>
<dbReference type="UniPathway" id="UPA00154"/>
<dbReference type="ExpressionAtlas" id="P51117">
    <property type="expression patterns" value="baseline and differential"/>
</dbReference>
<dbReference type="GO" id="GO:0045430">
    <property type="term" value="F:chalcone isomerase activity"/>
    <property type="evidence" value="ECO:0007669"/>
    <property type="project" value="UniProtKB-EC"/>
</dbReference>
<dbReference type="GO" id="GO:0009813">
    <property type="term" value="P:flavonoid biosynthetic process"/>
    <property type="evidence" value="ECO:0007669"/>
    <property type="project" value="UniProtKB-UniPathway"/>
</dbReference>
<dbReference type="Gene3D" id="1.10.890.20">
    <property type="match status" value="1"/>
</dbReference>
<dbReference type="Gene3D" id="3.50.70.10">
    <property type="match status" value="1"/>
</dbReference>
<dbReference type="InterPro" id="IPR044164">
    <property type="entry name" value="CFI"/>
</dbReference>
<dbReference type="InterPro" id="IPR016087">
    <property type="entry name" value="Chalcone_isomerase"/>
</dbReference>
<dbReference type="InterPro" id="IPR016088">
    <property type="entry name" value="Chalcone_isomerase_3-sand"/>
</dbReference>
<dbReference type="InterPro" id="IPR016089">
    <property type="entry name" value="Chalcone_isomerase_bundle_sf"/>
</dbReference>
<dbReference type="InterPro" id="IPR036298">
    <property type="entry name" value="Chalcone_isomerase_sf"/>
</dbReference>
<dbReference type="PANTHER" id="PTHR28039:SF8">
    <property type="entry name" value="CHALCONE--FLAVANONE ISOMERASE 1-RELATED"/>
    <property type="match status" value="1"/>
</dbReference>
<dbReference type="PANTHER" id="PTHR28039">
    <property type="entry name" value="CHALCONE--FLAVONONE ISOMERASE 1-RELATED"/>
    <property type="match status" value="1"/>
</dbReference>
<dbReference type="Pfam" id="PF02431">
    <property type="entry name" value="Chalcone"/>
    <property type="match status" value="1"/>
</dbReference>
<dbReference type="SUPFAM" id="SSF54626">
    <property type="entry name" value="Chalcone isomerase"/>
    <property type="match status" value="1"/>
</dbReference>
<organism>
    <name type="scientific">Vitis vinifera</name>
    <name type="common">Grape</name>
    <dbReference type="NCBI Taxonomy" id="29760"/>
    <lineage>
        <taxon>Eukaryota</taxon>
        <taxon>Viridiplantae</taxon>
        <taxon>Streptophyta</taxon>
        <taxon>Embryophyta</taxon>
        <taxon>Tracheophyta</taxon>
        <taxon>Spermatophyta</taxon>
        <taxon>Magnoliopsida</taxon>
        <taxon>eudicotyledons</taxon>
        <taxon>Gunneridae</taxon>
        <taxon>Pentapetalae</taxon>
        <taxon>rosids</taxon>
        <taxon>Vitales</taxon>
        <taxon>Vitaceae</taxon>
        <taxon>Viteae</taxon>
        <taxon>Vitis</taxon>
    </lineage>
</organism>
<proteinExistence type="evidence at transcript level"/>
<protein>
    <recommendedName>
        <fullName>Chalcone--flavanone isomerase 1</fullName>
        <shortName>Chalcone isomerase 1</shortName>
        <ecNumber>5.5.1.6</ecNumber>
    </recommendedName>
</protein>
<evidence type="ECO:0000250" key="1"/>
<evidence type="ECO:0000305" key="2"/>
<feature type="chain" id="PRO_0000166443" description="Chalcone--flavanone isomerase 1">
    <location>
        <begin position="1"/>
        <end position="234"/>
    </location>
</feature>
<feature type="binding site" evidence="1">
    <location>
        <position position="50"/>
    </location>
    <ligand>
        <name>substrate</name>
    </ligand>
</feature>
<feature type="binding site" evidence="1">
    <location>
        <position position="115"/>
    </location>
    <ligand>
        <name>substrate</name>
    </ligand>
</feature>
<feature type="binding site" evidence="1">
    <location>
        <position position="192"/>
    </location>
    <ligand>
        <name>substrate</name>
    </ligand>
</feature>
<feature type="site" description="Important for catalytic activity" evidence="1">
    <location>
        <position position="108"/>
    </location>
</feature>
<sequence length="234" mass="25140">MSQVPSVTAVQVENVLFPPSVKPPGSTNDLFLGGAGVRGLEIQGKFVKFTAIGVYLENSAVPTLAVKWKGKTVEELADSVDFFRDVVTGPFEKFTKVTTILPLTGRQYSDKVSENCVAFWKSVGIYTDAEAKAIEKFNEVLKDETFPPGNSILFTHSPLGALTMSFSKDGSLPEVGNAVIENKLLTEAVLESIIGKHGVSPEAKKSLAARLSELFCKEAGDEKIEAEKVAPVAC</sequence>
<keyword id="KW-0284">Flavonoid biosynthesis</keyword>
<keyword id="KW-0413">Isomerase</keyword>